<evidence type="ECO:0000255" key="1">
    <source>
        <dbReference type="HAMAP-Rule" id="MF_01864"/>
    </source>
</evidence>
<evidence type="ECO:0000255" key="2">
    <source>
        <dbReference type="PROSITE-ProRule" id="PRU01266"/>
    </source>
</evidence>
<keyword id="KW-0004">4Fe-4S</keyword>
<keyword id="KW-0963">Cytoplasm</keyword>
<keyword id="KW-0408">Iron</keyword>
<keyword id="KW-0411">Iron-sulfur</keyword>
<keyword id="KW-0479">Metal-binding</keyword>
<keyword id="KW-1185">Reference proteome</keyword>
<keyword id="KW-0949">S-adenosyl-L-methionine</keyword>
<keyword id="KW-0808">Transferase</keyword>
<keyword id="KW-0819">tRNA processing</keyword>
<name>MIAB_PARDP</name>
<gene>
    <name evidence="1" type="primary">miaB</name>
    <name type="ordered locus">Pden_3701</name>
</gene>
<accession>A1B8C4</accession>
<dbReference type="EC" id="2.8.4.3" evidence="1"/>
<dbReference type="EMBL" id="CP000490">
    <property type="protein sequence ID" value="ABL71768.1"/>
    <property type="molecule type" value="Genomic_DNA"/>
</dbReference>
<dbReference type="RefSeq" id="WP_011749937.1">
    <property type="nucleotide sequence ID" value="NC_008687.1"/>
</dbReference>
<dbReference type="SMR" id="A1B8C4"/>
<dbReference type="STRING" id="318586.Pden_3701"/>
<dbReference type="EnsemblBacteria" id="ABL71768">
    <property type="protein sequence ID" value="ABL71768"/>
    <property type="gene ID" value="Pden_3701"/>
</dbReference>
<dbReference type="GeneID" id="93453359"/>
<dbReference type="KEGG" id="pde:Pden_3701"/>
<dbReference type="eggNOG" id="COG0621">
    <property type="taxonomic scope" value="Bacteria"/>
</dbReference>
<dbReference type="HOGENOM" id="CLU_018697_2_0_5"/>
<dbReference type="OrthoDB" id="9805215at2"/>
<dbReference type="Proteomes" id="UP000000361">
    <property type="component" value="Chromosome 2"/>
</dbReference>
<dbReference type="GO" id="GO:0005829">
    <property type="term" value="C:cytosol"/>
    <property type="evidence" value="ECO:0007669"/>
    <property type="project" value="TreeGrafter"/>
</dbReference>
<dbReference type="GO" id="GO:0051539">
    <property type="term" value="F:4 iron, 4 sulfur cluster binding"/>
    <property type="evidence" value="ECO:0007669"/>
    <property type="project" value="UniProtKB-UniRule"/>
</dbReference>
<dbReference type="GO" id="GO:0046872">
    <property type="term" value="F:metal ion binding"/>
    <property type="evidence" value="ECO:0007669"/>
    <property type="project" value="UniProtKB-KW"/>
</dbReference>
<dbReference type="GO" id="GO:0035597">
    <property type="term" value="F:N6-isopentenyladenosine methylthiotransferase activity"/>
    <property type="evidence" value="ECO:0007669"/>
    <property type="project" value="TreeGrafter"/>
</dbReference>
<dbReference type="CDD" id="cd01335">
    <property type="entry name" value="Radical_SAM"/>
    <property type="match status" value="1"/>
</dbReference>
<dbReference type="FunFam" id="3.40.50.12160:FF:000001">
    <property type="entry name" value="tRNA-2-methylthio-N(6)-dimethylallyladenosine synthase"/>
    <property type="match status" value="1"/>
</dbReference>
<dbReference type="FunFam" id="3.80.30.20:FF:000001">
    <property type="entry name" value="tRNA-2-methylthio-N(6)-dimethylallyladenosine synthase 2"/>
    <property type="match status" value="1"/>
</dbReference>
<dbReference type="Gene3D" id="3.40.50.12160">
    <property type="entry name" value="Methylthiotransferase, N-terminal domain"/>
    <property type="match status" value="1"/>
</dbReference>
<dbReference type="Gene3D" id="3.80.30.20">
    <property type="entry name" value="tm_1862 like domain"/>
    <property type="match status" value="1"/>
</dbReference>
<dbReference type="HAMAP" id="MF_01864">
    <property type="entry name" value="tRNA_metthiotr_MiaB"/>
    <property type="match status" value="1"/>
</dbReference>
<dbReference type="InterPro" id="IPR006638">
    <property type="entry name" value="Elp3/MiaA/NifB-like_rSAM"/>
</dbReference>
<dbReference type="InterPro" id="IPR005839">
    <property type="entry name" value="Methylthiotransferase"/>
</dbReference>
<dbReference type="InterPro" id="IPR020612">
    <property type="entry name" value="Methylthiotransferase_CS"/>
</dbReference>
<dbReference type="InterPro" id="IPR013848">
    <property type="entry name" value="Methylthiotransferase_N"/>
</dbReference>
<dbReference type="InterPro" id="IPR038135">
    <property type="entry name" value="Methylthiotransferase_N_sf"/>
</dbReference>
<dbReference type="InterPro" id="IPR006463">
    <property type="entry name" value="MiaB_methiolase"/>
</dbReference>
<dbReference type="InterPro" id="IPR007197">
    <property type="entry name" value="rSAM"/>
</dbReference>
<dbReference type="InterPro" id="IPR023404">
    <property type="entry name" value="rSAM_horseshoe"/>
</dbReference>
<dbReference type="InterPro" id="IPR002792">
    <property type="entry name" value="TRAM_dom"/>
</dbReference>
<dbReference type="NCBIfam" id="TIGR01574">
    <property type="entry name" value="miaB-methiolase"/>
    <property type="match status" value="1"/>
</dbReference>
<dbReference type="NCBIfam" id="TIGR00089">
    <property type="entry name" value="MiaB/RimO family radical SAM methylthiotransferase"/>
    <property type="match status" value="1"/>
</dbReference>
<dbReference type="PANTHER" id="PTHR43020">
    <property type="entry name" value="CDK5 REGULATORY SUBUNIT-ASSOCIATED PROTEIN 1"/>
    <property type="match status" value="1"/>
</dbReference>
<dbReference type="PANTHER" id="PTHR43020:SF2">
    <property type="entry name" value="MITOCHONDRIAL TRNA METHYLTHIOTRANSFERASE CDK5RAP1"/>
    <property type="match status" value="1"/>
</dbReference>
<dbReference type="Pfam" id="PF04055">
    <property type="entry name" value="Radical_SAM"/>
    <property type="match status" value="1"/>
</dbReference>
<dbReference type="Pfam" id="PF01938">
    <property type="entry name" value="TRAM"/>
    <property type="match status" value="1"/>
</dbReference>
<dbReference type="Pfam" id="PF00919">
    <property type="entry name" value="UPF0004"/>
    <property type="match status" value="1"/>
</dbReference>
<dbReference type="SFLD" id="SFLDF00273">
    <property type="entry name" value="(dimethylallyl)adenosine_tRNA"/>
    <property type="match status" value="1"/>
</dbReference>
<dbReference type="SFLD" id="SFLDG01082">
    <property type="entry name" value="B12-binding_domain_containing"/>
    <property type="match status" value="1"/>
</dbReference>
<dbReference type="SFLD" id="SFLDG01061">
    <property type="entry name" value="methylthiotransferase"/>
    <property type="match status" value="1"/>
</dbReference>
<dbReference type="SMART" id="SM00729">
    <property type="entry name" value="Elp3"/>
    <property type="match status" value="1"/>
</dbReference>
<dbReference type="SUPFAM" id="SSF102114">
    <property type="entry name" value="Radical SAM enzymes"/>
    <property type="match status" value="1"/>
</dbReference>
<dbReference type="PROSITE" id="PS51449">
    <property type="entry name" value="MTTASE_N"/>
    <property type="match status" value="1"/>
</dbReference>
<dbReference type="PROSITE" id="PS01278">
    <property type="entry name" value="MTTASE_RADICAL"/>
    <property type="match status" value="1"/>
</dbReference>
<dbReference type="PROSITE" id="PS51918">
    <property type="entry name" value="RADICAL_SAM"/>
    <property type="match status" value="1"/>
</dbReference>
<dbReference type="PROSITE" id="PS50926">
    <property type="entry name" value="TRAM"/>
    <property type="match status" value="1"/>
</dbReference>
<protein>
    <recommendedName>
        <fullName evidence="1">tRNA-2-methylthio-N(6)-dimethylallyladenosine synthase</fullName>
        <ecNumber evidence="1">2.8.4.3</ecNumber>
    </recommendedName>
    <alternativeName>
        <fullName evidence="1">(Dimethylallyl)adenosine tRNA methylthiotransferase MiaB</fullName>
    </alternativeName>
    <alternativeName>
        <fullName evidence="1">tRNA-i(6)A37 methylthiotransferase</fullName>
    </alternativeName>
</protein>
<proteinExistence type="inferred from homology"/>
<comment type="function">
    <text evidence="1">Catalyzes the methylthiolation of N6-(dimethylallyl)adenosine (i(6)A), leading to the formation of 2-methylthio-N6-(dimethylallyl)adenosine (ms(2)i(6)A) at position 37 in tRNAs that read codons beginning with uridine.</text>
</comment>
<comment type="catalytic activity">
    <reaction evidence="1">
        <text>N(6)-dimethylallyladenosine(37) in tRNA + (sulfur carrier)-SH + AH2 + 2 S-adenosyl-L-methionine = 2-methylsulfanyl-N(6)-dimethylallyladenosine(37) in tRNA + (sulfur carrier)-H + 5'-deoxyadenosine + L-methionine + A + S-adenosyl-L-homocysteine + 2 H(+)</text>
        <dbReference type="Rhea" id="RHEA:37067"/>
        <dbReference type="Rhea" id="RHEA-COMP:10375"/>
        <dbReference type="Rhea" id="RHEA-COMP:10376"/>
        <dbReference type="Rhea" id="RHEA-COMP:14737"/>
        <dbReference type="Rhea" id="RHEA-COMP:14739"/>
        <dbReference type="ChEBI" id="CHEBI:13193"/>
        <dbReference type="ChEBI" id="CHEBI:15378"/>
        <dbReference type="ChEBI" id="CHEBI:17319"/>
        <dbReference type="ChEBI" id="CHEBI:17499"/>
        <dbReference type="ChEBI" id="CHEBI:29917"/>
        <dbReference type="ChEBI" id="CHEBI:57844"/>
        <dbReference type="ChEBI" id="CHEBI:57856"/>
        <dbReference type="ChEBI" id="CHEBI:59789"/>
        <dbReference type="ChEBI" id="CHEBI:64428"/>
        <dbReference type="ChEBI" id="CHEBI:74415"/>
        <dbReference type="ChEBI" id="CHEBI:74417"/>
        <dbReference type="EC" id="2.8.4.3"/>
    </reaction>
</comment>
<comment type="cofactor">
    <cofactor evidence="1">
        <name>[4Fe-4S] cluster</name>
        <dbReference type="ChEBI" id="CHEBI:49883"/>
    </cofactor>
    <text evidence="1">Binds 2 [4Fe-4S] clusters. One cluster is coordinated with 3 cysteines and an exchangeable S-adenosyl-L-methionine.</text>
</comment>
<comment type="subunit">
    <text evidence="1">Monomer.</text>
</comment>
<comment type="subcellular location">
    <subcellularLocation>
        <location evidence="1">Cytoplasm</location>
    </subcellularLocation>
</comment>
<comment type="similarity">
    <text evidence="1">Belongs to the methylthiotransferase family. MiaB subfamily.</text>
</comment>
<sequence length="445" mass="48976">MSDQASKPAPAVKKLFIKTYGCQMNVYDSQRMAEAMGAEGYVLTENQSDADMVLLNTCHIREKAAEKLYSDLGRLKPLKAERPDLKIGVAGCVAQAEGEEIQRRMPIVDLVVGPQAYHRLPAMARAGRGVDTEFPAEDKFEHLPKPAATRRAPAAFLTVQEGCDKFCAFCVVPYTRGAEVSRPVSRILAEARDLVARGVREITLLGQNVNGWHGEGPEGSEWGFGRLIRAIAEIDGLDRIRYTTSHPNDMADDLIAAHRDEPKLMPYLHLPVQSGSDRILKAMNRRHTVDQYLRLIERIREARPDIMLTSDFIVGFPGETDQDHQGTLELVRAVNFGTAFSFKYSPRPGTPAYERPEIEGAVADARLQELQALLTSQQKAAQEGMVGRELGVLFEKPGRNPGQMVGKSDYLHAVFVEAPAAKVGDLVRVRITHSAPNSLAGVLAA</sequence>
<reference key="1">
    <citation type="submission" date="2006-12" db="EMBL/GenBank/DDBJ databases">
        <title>Complete sequence of chromosome 2 of Paracoccus denitrificans PD1222.</title>
        <authorList>
            <person name="Copeland A."/>
            <person name="Lucas S."/>
            <person name="Lapidus A."/>
            <person name="Barry K."/>
            <person name="Detter J.C."/>
            <person name="Glavina del Rio T."/>
            <person name="Hammon N."/>
            <person name="Israni S."/>
            <person name="Dalin E."/>
            <person name="Tice H."/>
            <person name="Pitluck S."/>
            <person name="Munk A.C."/>
            <person name="Brettin T."/>
            <person name="Bruce D."/>
            <person name="Han C."/>
            <person name="Tapia R."/>
            <person name="Gilna P."/>
            <person name="Schmutz J."/>
            <person name="Larimer F."/>
            <person name="Land M."/>
            <person name="Hauser L."/>
            <person name="Kyrpides N."/>
            <person name="Lykidis A."/>
            <person name="Spiro S."/>
            <person name="Richardson D.J."/>
            <person name="Moir J.W.B."/>
            <person name="Ferguson S.J."/>
            <person name="van Spanning R.J.M."/>
            <person name="Richardson P."/>
        </authorList>
    </citation>
    <scope>NUCLEOTIDE SEQUENCE [LARGE SCALE GENOMIC DNA]</scope>
    <source>
        <strain>Pd 1222</strain>
    </source>
</reference>
<feature type="chain" id="PRO_0000374425" description="tRNA-2-methylthio-N(6)-dimethylallyladenosine synthase">
    <location>
        <begin position="1"/>
        <end position="445"/>
    </location>
</feature>
<feature type="domain" description="MTTase N-terminal" evidence="1">
    <location>
        <begin position="13"/>
        <end position="129"/>
    </location>
</feature>
<feature type="domain" description="Radical SAM core" evidence="2">
    <location>
        <begin position="149"/>
        <end position="383"/>
    </location>
</feature>
<feature type="domain" description="TRAM" evidence="1">
    <location>
        <begin position="383"/>
        <end position="445"/>
    </location>
</feature>
<feature type="binding site" evidence="1">
    <location>
        <position position="22"/>
    </location>
    <ligand>
        <name>[4Fe-4S] cluster</name>
        <dbReference type="ChEBI" id="CHEBI:49883"/>
        <label>1</label>
    </ligand>
</feature>
<feature type="binding site" evidence="1">
    <location>
        <position position="58"/>
    </location>
    <ligand>
        <name>[4Fe-4S] cluster</name>
        <dbReference type="ChEBI" id="CHEBI:49883"/>
        <label>1</label>
    </ligand>
</feature>
<feature type="binding site" evidence="1">
    <location>
        <position position="92"/>
    </location>
    <ligand>
        <name>[4Fe-4S] cluster</name>
        <dbReference type="ChEBI" id="CHEBI:49883"/>
        <label>1</label>
    </ligand>
</feature>
<feature type="binding site" evidence="1">
    <location>
        <position position="163"/>
    </location>
    <ligand>
        <name>[4Fe-4S] cluster</name>
        <dbReference type="ChEBI" id="CHEBI:49883"/>
        <label>2</label>
        <note>4Fe-4S-S-AdoMet</note>
    </ligand>
</feature>
<feature type="binding site" evidence="1">
    <location>
        <position position="167"/>
    </location>
    <ligand>
        <name>[4Fe-4S] cluster</name>
        <dbReference type="ChEBI" id="CHEBI:49883"/>
        <label>2</label>
        <note>4Fe-4S-S-AdoMet</note>
    </ligand>
</feature>
<feature type="binding site" evidence="1">
    <location>
        <position position="170"/>
    </location>
    <ligand>
        <name>[4Fe-4S] cluster</name>
        <dbReference type="ChEBI" id="CHEBI:49883"/>
        <label>2</label>
        <note>4Fe-4S-S-AdoMet</note>
    </ligand>
</feature>
<organism>
    <name type="scientific">Paracoccus denitrificans (strain Pd 1222)</name>
    <dbReference type="NCBI Taxonomy" id="318586"/>
    <lineage>
        <taxon>Bacteria</taxon>
        <taxon>Pseudomonadati</taxon>
        <taxon>Pseudomonadota</taxon>
        <taxon>Alphaproteobacteria</taxon>
        <taxon>Rhodobacterales</taxon>
        <taxon>Paracoccaceae</taxon>
        <taxon>Paracoccus</taxon>
    </lineage>
</organism>